<sequence>MYGGICICVLLAALSVSSLGQQPAGSHDGSPVAAELQQSLTEPHRHSRAPSSAGPLKPAPRLDGSFEQRATIGALLAKYLQQARKGSTGRFSVLGNRVQSIDPTHRINDRDYMGWMDFGRRSAEEYEYSS</sequence>
<keyword id="KW-0027">Amidation</keyword>
<keyword id="KW-0165">Cleavage on pair of basic residues</keyword>
<keyword id="KW-0903">Direct protein sequencing</keyword>
<keyword id="KW-0372">Hormone</keyword>
<keyword id="KW-1185">Reference proteome</keyword>
<keyword id="KW-0964">Secreted</keyword>
<keyword id="KW-0732">Signal</keyword>
<keyword id="KW-0765">Sulfation</keyword>
<feature type="signal peptide" evidence="3">
    <location>
        <begin position="1"/>
        <end position="20"/>
    </location>
</feature>
<feature type="chain" id="PRO_0000010574" description="Cholecystokinin" evidence="3">
    <location>
        <begin position="21"/>
        <end position="130"/>
    </location>
</feature>
<feature type="propeptide" id="PRO_0000010575" evidence="11">
    <location>
        <begin position="21"/>
        <end position="48"/>
    </location>
</feature>
<feature type="peptide" id="PRO_0000010576" description="Cholecystokinin-70" evidence="12">
    <location>
        <begin position="49"/>
        <end position="118"/>
    </location>
</feature>
<feature type="peptide" id="PRO_0000010577" description="Cholecystokinin-8">
    <location>
        <begin position="111"/>
        <end position="118"/>
    </location>
</feature>
<feature type="peptide" id="PRO_0000010578" description="Cholecystokinin-7" evidence="1">
    <location>
        <begin position="112"/>
        <end position="118"/>
    </location>
</feature>
<feature type="propeptide" id="PRO_0000010579" evidence="11">
    <location>
        <begin position="122"/>
        <end position="130"/>
    </location>
</feature>
<feature type="region of interest" description="Disordered" evidence="4">
    <location>
        <begin position="21"/>
        <end position="63"/>
    </location>
</feature>
<feature type="modified residue" description="Sulfotyrosine" evidence="7">
    <location>
        <position position="112"/>
    </location>
</feature>
<feature type="modified residue" description="Phenylalanine amide" evidence="7">
    <location>
        <position position="118"/>
    </location>
</feature>
<feature type="modified residue" description="Sulfotyrosine" evidence="2">
    <location>
        <position position="126"/>
    </location>
</feature>
<feature type="modified residue" description="Sulfotyrosine" evidence="2">
    <location>
        <position position="128"/>
    </location>
</feature>
<evidence type="ECO:0000250" key="1"/>
<evidence type="ECO:0000250" key="2">
    <source>
        <dbReference type="UniProtKB" id="P01356"/>
    </source>
</evidence>
<evidence type="ECO:0000255" key="3"/>
<evidence type="ECO:0000256" key="4">
    <source>
        <dbReference type="SAM" id="MobiDB-lite"/>
    </source>
</evidence>
<evidence type="ECO:0000269" key="5">
    <source>
    </source>
</evidence>
<evidence type="ECO:0000269" key="6">
    <source>
    </source>
</evidence>
<evidence type="ECO:0000269" key="7">
    <source>
    </source>
</evidence>
<evidence type="ECO:0000269" key="8">
    <source>
    </source>
</evidence>
<evidence type="ECO:0000269" key="9">
    <source>
    </source>
</evidence>
<evidence type="ECO:0000269" key="10">
    <source>
    </source>
</evidence>
<evidence type="ECO:0000303" key="11">
    <source>
    </source>
</evidence>
<evidence type="ECO:0000305" key="12"/>
<evidence type="ECO:0000312" key="13">
    <source>
        <dbReference type="EMBL" id="CAB62203.1"/>
    </source>
</evidence>
<proteinExistence type="evidence at protein level"/>
<organism>
    <name type="scientific">Gallus gallus</name>
    <name type="common">Chicken</name>
    <dbReference type="NCBI Taxonomy" id="9031"/>
    <lineage>
        <taxon>Eukaryota</taxon>
        <taxon>Metazoa</taxon>
        <taxon>Chordata</taxon>
        <taxon>Craniata</taxon>
        <taxon>Vertebrata</taxon>
        <taxon>Euteleostomi</taxon>
        <taxon>Archelosauria</taxon>
        <taxon>Archosauria</taxon>
        <taxon>Dinosauria</taxon>
        <taxon>Saurischia</taxon>
        <taxon>Theropoda</taxon>
        <taxon>Coelurosauria</taxon>
        <taxon>Aves</taxon>
        <taxon>Neognathae</taxon>
        <taxon>Galloanserae</taxon>
        <taxon>Galliformes</taxon>
        <taxon>Phasianidae</taxon>
        <taxon>Phasianinae</taxon>
        <taxon>Gallus</taxon>
    </lineage>
</organism>
<accession>Q9PU41</accession>
<reference evidence="12 13" key="1">
    <citation type="journal article" date="2000" name="Peptides">
        <title>Identification of ostrich and chicken cholecystokinin cDNA and intestinal peptides.</title>
        <authorList>
            <person name="Jonson L."/>
            <person name="Schoeman N."/>
            <person name="Saayman H."/>
            <person name="Naude R."/>
            <person name="Jensen H."/>
            <person name="Johnsen A.H."/>
        </authorList>
    </citation>
    <scope>NUCLEOTIDE SEQUENCE [MRNA]</scope>
    <scope>TISSUE SPECIFICITY</scope>
    <source>
        <strain evidence="6">White Plymouthrock</strain>
    </source>
</reference>
<reference evidence="12" key="2">
    <citation type="journal article" date="1987" name="Brain Res. Bull.">
        <title>Cholecystokinin octapeptides purified from chinchilla and chicken brains.</title>
        <authorList>
            <person name="Fan Z.-W."/>
            <person name="Eng J."/>
            <person name="Miedel M."/>
            <person name="Hulmes J.D."/>
            <person name="Pan Y.-C."/>
            <person name="Yalow R.S."/>
        </authorList>
    </citation>
    <scope>PROTEIN SEQUENCE OF 111-118</scope>
    <scope>SULFATION AT TYR-112</scope>
    <scope>AMIDATION AT PHE-118</scope>
    <source>
        <tissue evidence="7">Brain</tissue>
    </source>
</reference>
<reference evidence="12" key="3">
    <citation type="journal article" date="1993" name="Life Sci.">
        <title>Effects of cholecystokinin and gastrin on gastroduodenal motility and coordination in chickens.</title>
        <authorList>
            <person name="Martinez V."/>
            <person name="Jimenez M."/>
            <person name="Gonalons E."/>
            <person name="Vergara P."/>
        </authorList>
    </citation>
    <scope>FUNCTION</scope>
</reference>
<reference evidence="12" key="4">
    <citation type="journal article" date="1996" name="Life Sci.">
        <title>Central and NO mediated mechanisms are involved in the inhibitory effects of CCK on the chicken cecorectal area.</title>
        <authorList>
            <person name="Rodriguez-Sinovas A."/>
            <person name="Fernandez E."/>
            <person name="Gonalons E."/>
        </authorList>
    </citation>
    <scope>FUNCTION</scope>
</reference>
<reference evidence="12" key="5">
    <citation type="journal article" date="1997" name="Am. J. Physiol.">
        <title>CCK is involved in both peripheral and central mechanisms controlling food intake in chickens.</title>
        <authorList>
            <person name="Rodriguez-Sinovas A."/>
            <person name="Fernandez E."/>
            <person name="Manteca X."/>
            <person name="Fernandez A.G."/>
            <person name="Gonalons E."/>
        </authorList>
    </citation>
    <scope>FUNCTION</scope>
</reference>
<reference evidence="12" key="6">
    <citation type="journal article" date="1999" name="J. Exp. Zool.">
        <title>Release and endogenous actions of the gastrin/cholecystokinin (CCK) family in the chicken.</title>
        <authorList>
            <person name="Furuse M."/>
        </authorList>
    </citation>
    <scope>INDUCTION</scope>
    <scope>FUNCTION</scope>
</reference>
<gene>
    <name type="primary">CCK</name>
</gene>
<protein>
    <recommendedName>
        <fullName>Cholecystokinin</fullName>
        <shortName>CCK</shortName>
    </recommendedName>
    <component>
        <recommendedName>
            <fullName>Cholecystokinin-70</fullName>
            <shortName>CCK70</shortName>
        </recommendedName>
    </component>
    <component>
        <recommendedName>
            <fullName>Cholecystokinin-8</fullName>
            <shortName>CCK8</shortName>
        </recommendedName>
    </component>
    <component>
        <recommendedName>
            <fullName>Cholecystokinin-7</fullName>
            <shortName>CCK7</shortName>
        </recommendedName>
    </component>
</protein>
<dbReference type="EMBL" id="AJ251273">
    <property type="protein sequence ID" value="CAB62203.1"/>
    <property type="molecule type" value="mRNA"/>
</dbReference>
<dbReference type="RefSeq" id="NP_001001741.1">
    <property type="nucleotide sequence ID" value="NM_001001741.2"/>
</dbReference>
<dbReference type="RefSeq" id="XP_015136818.2">
    <property type="nucleotide sequence ID" value="XM_015281332.4"/>
</dbReference>
<dbReference type="RefSeq" id="XP_046766551.1">
    <property type="nucleotide sequence ID" value="XM_046910595.1"/>
</dbReference>
<dbReference type="FunCoup" id="Q9PU41">
    <property type="interactions" value="11"/>
</dbReference>
<dbReference type="STRING" id="9031.ENSGALP00000044506"/>
<dbReference type="PaxDb" id="9031-ENSGALP00000019451"/>
<dbReference type="Ensembl" id="ENSGALT00010039742.1">
    <property type="protein sequence ID" value="ENSGALP00010022994.1"/>
    <property type="gene ID" value="ENSGALG00010016489.1"/>
</dbReference>
<dbReference type="GeneID" id="414884"/>
<dbReference type="KEGG" id="gga:414884"/>
<dbReference type="CTD" id="885"/>
<dbReference type="VEuPathDB" id="HostDB:geneid_414884"/>
<dbReference type="eggNOG" id="ENOG502S472">
    <property type="taxonomic scope" value="Eukaryota"/>
</dbReference>
<dbReference type="GeneTree" id="ENSGT00390000003571"/>
<dbReference type="InParanoid" id="Q9PU41"/>
<dbReference type="OMA" id="GSHNENP"/>
<dbReference type="OrthoDB" id="9862982at2759"/>
<dbReference type="PhylomeDB" id="Q9PU41"/>
<dbReference type="PRO" id="PR:Q9PU41"/>
<dbReference type="Proteomes" id="UP000000539">
    <property type="component" value="Chromosome 2"/>
</dbReference>
<dbReference type="GO" id="GO:0030424">
    <property type="term" value="C:axon"/>
    <property type="evidence" value="ECO:0000250"/>
    <property type="project" value="UniProtKB"/>
</dbReference>
<dbReference type="GO" id="GO:0005615">
    <property type="term" value="C:extracellular space"/>
    <property type="evidence" value="ECO:0000318"/>
    <property type="project" value="GO_Central"/>
</dbReference>
<dbReference type="GO" id="GO:0005179">
    <property type="term" value="F:hormone activity"/>
    <property type="evidence" value="ECO:0000303"/>
    <property type="project" value="UniProtKB"/>
</dbReference>
<dbReference type="GO" id="GO:0005184">
    <property type="term" value="F:neuropeptide hormone activity"/>
    <property type="evidence" value="ECO:0000318"/>
    <property type="project" value="GO_Central"/>
</dbReference>
<dbReference type="GO" id="GO:0007409">
    <property type="term" value="P:axonogenesis"/>
    <property type="evidence" value="ECO:0000250"/>
    <property type="project" value="UniProtKB"/>
</dbReference>
<dbReference type="GO" id="GO:0007586">
    <property type="term" value="P:digestion"/>
    <property type="evidence" value="ECO:0000314"/>
    <property type="project" value="UniProtKB"/>
</dbReference>
<dbReference type="GO" id="GO:0001764">
    <property type="term" value="P:neuron migration"/>
    <property type="evidence" value="ECO:0000250"/>
    <property type="project" value="UniProtKB"/>
</dbReference>
<dbReference type="InterPro" id="IPR015499">
    <property type="entry name" value="CCK-like"/>
</dbReference>
<dbReference type="InterPro" id="IPR001651">
    <property type="entry name" value="Gastrin/CCK"/>
</dbReference>
<dbReference type="InterPro" id="IPR013152">
    <property type="entry name" value="Gastrin/cholecystokinin_CS"/>
</dbReference>
<dbReference type="PANTHER" id="PTHR10786">
    <property type="entry name" value="CHOLECYSTOKININ"/>
    <property type="match status" value="1"/>
</dbReference>
<dbReference type="PANTHER" id="PTHR10786:SF0">
    <property type="entry name" value="CHOLECYSTOKININ"/>
    <property type="match status" value="1"/>
</dbReference>
<dbReference type="Pfam" id="PF00918">
    <property type="entry name" value="Gastrin"/>
    <property type="match status" value="1"/>
</dbReference>
<dbReference type="SMART" id="SM00029">
    <property type="entry name" value="GASTRIN"/>
    <property type="match status" value="1"/>
</dbReference>
<dbReference type="PROSITE" id="PS00259">
    <property type="entry name" value="GASTRIN"/>
    <property type="match status" value="1"/>
</dbReference>
<comment type="function">
    <text evidence="2 5 8 9 10">This peptide hormone induces gall bladder contraction and the release of pancreatic enzymes in the gut. Its function in the brain is not clear (By similarity). It also decreases food intake and regulates gastrointestinal physiological processes.</text>
</comment>
<comment type="subcellular location">
    <subcellularLocation>
        <location>Secreted</location>
    </subcellularLocation>
</comment>
<comment type="tissue specificity">
    <text evidence="6">In the small intestine, the major production site is around the vitelline diverticulum.</text>
</comment>
<comment type="induction">
    <text evidence="5">By dietary protein, amino acids and medium-chain triacylglycerol.</text>
</comment>
<comment type="PTM">
    <text>The precursor is cleaved by proteases to produce a number of active cholecystokinins.</text>
</comment>
<comment type="similarity">
    <text evidence="2">Belongs to the gastrin/cholecystokinin family.</text>
</comment>
<name>CCKN_CHICK</name>